<comment type="function">
    <text evidence="1">Catalyzes the attachment of serine to tRNA(Ser). Is also able to aminoacylate tRNA(Sec) with serine, to form the misacylated tRNA L-seryl-tRNA(Sec), which will be further converted into selenocysteinyl-tRNA(Sec).</text>
</comment>
<comment type="catalytic activity">
    <reaction evidence="1">
        <text>tRNA(Ser) + L-serine + ATP = L-seryl-tRNA(Ser) + AMP + diphosphate + H(+)</text>
        <dbReference type="Rhea" id="RHEA:12292"/>
        <dbReference type="Rhea" id="RHEA-COMP:9669"/>
        <dbReference type="Rhea" id="RHEA-COMP:9703"/>
        <dbReference type="ChEBI" id="CHEBI:15378"/>
        <dbReference type="ChEBI" id="CHEBI:30616"/>
        <dbReference type="ChEBI" id="CHEBI:33019"/>
        <dbReference type="ChEBI" id="CHEBI:33384"/>
        <dbReference type="ChEBI" id="CHEBI:78442"/>
        <dbReference type="ChEBI" id="CHEBI:78533"/>
        <dbReference type="ChEBI" id="CHEBI:456215"/>
        <dbReference type="EC" id="6.1.1.11"/>
    </reaction>
</comment>
<comment type="catalytic activity">
    <reaction evidence="1">
        <text>tRNA(Sec) + L-serine + ATP = L-seryl-tRNA(Sec) + AMP + diphosphate + H(+)</text>
        <dbReference type="Rhea" id="RHEA:42580"/>
        <dbReference type="Rhea" id="RHEA-COMP:9742"/>
        <dbReference type="Rhea" id="RHEA-COMP:10128"/>
        <dbReference type="ChEBI" id="CHEBI:15378"/>
        <dbReference type="ChEBI" id="CHEBI:30616"/>
        <dbReference type="ChEBI" id="CHEBI:33019"/>
        <dbReference type="ChEBI" id="CHEBI:33384"/>
        <dbReference type="ChEBI" id="CHEBI:78442"/>
        <dbReference type="ChEBI" id="CHEBI:78533"/>
        <dbReference type="ChEBI" id="CHEBI:456215"/>
        <dbReference type="EC" id="6.1.1.11"/>
    </reaction>
</comment>
<comment type="pathway">
    <text evidence="1">Aminoacyl-tRNA biosynthesis; selenocysteinyl-tRNA(Sec) biosynthesis; L-seryl-tRNA(Sec) from L-serine and tRNA(Sec): step 1/1.</text>
</comment>
<comment type="subunit">
    <text evidence="1">Homodimer. The tRNA molecule binds across the dimer.</text>
</comment>
<comment type="subcellular location">
    <subcellularLocation>
        <location evidence="1">Cytoplasm</location>
    </subcellularLocation>
</comment>
<comment type="domain">
    <text evidence="1">Consists of two distinct domains, a catalytic core and a N-terminal extension that is involved in tRNA binding.</text>
</comment>
<comment type="similarity">
    <text evidence="1">Belongs to the class-II aminoacyl-tRNA synthetase family. Type-1 seryl-tRNA synthetase subfamily.</text>
</comment>
<gene>
    <name evidence="1" type="primary">serS</name>
    <name type="ordered locus">Mkms_5117</name>
</gene>
<feature type="chain" id="PRO_1000019740" description="Serine--tRNA ligase">
    <location>
        <begin position="1"/>
        <end position="417"/>
    </location>
</feature>
<feature type="binding site" evidence="1">
    <location>
        <begin position="226"/>
        <end position="228"/>
    </location>
    <ligand>
        <name>L-serine</name>
        <dbReference type="ChEBI" id="CHEBI:33384"/>
    </ligand>
</feature>
<feature type="binding site" evidence="1">
    <location>
        <begin position="257"/>
        <end position="259"/>
    </location>
    <ligand>
        <name>ATP</name>
        <dbReference type="ChEBI" id="CHEBI:30616"/>
    </ligand>
</feature>
<feature type="binding site" evidence="1">
    <location>
        <position position="273"/>
    </location>
    <ligand>
        <name>ATP</name>
        <dbReference type="ChEBI" id="CHEBI:30616"/>
    </ligand>
</feature>
<feature type="binding site" evidence="1">
    <location>
        <position position="280"/>
    </location>
    <ligand>
        <name>L-serine</name>
        <dbReference type="ChEBI" id="CHEBI:33384"/>
    </ligand>
</feature>
<feature type="binding site" evidence="1">
    <location>
        <begin position="344"/>
        <end position="347"/>
    </location>
    <ligand>
        <name>ATP</name>
        <dbReference type="ChEBI" id="CHEBI:30616"/>
    </ligand>
</feature>
<feature type="binding site" evidence="1">
    <location>
        <position position="379"/>
    </location>
    <ligand>
        <name>L-serine</name>
        <dbReference type="ChEBI" id="CHEBI:33384"/>
    </ligand>
</feature>
<reference key="1">
    <citation type="submission" date="2006-12" db="EMBL/GenBank/DDBJ databases">
        <title>Complete sequence of chromosome of Mycobacterium sp. KMS.</title>
        <authorList>
            <consortium name="US DOE Joint Genome Institute"/>
            <person name="Copeland A."/>
            <person name="Lucas S."/>
            <person name="Lapidus A."/>
            <person name="Barry K."/>
            <person name="Detter J.C."/>
            <person name="Glavina del Rio T."/>
            <person name="Hammon N."/>
            <person name="Israni S."/>
            <person name="Dalin E."/>
            <person name="Tice H."/>
            <person name="Pitluck S."/>
            <person name="Kiss H."/>
            <person name="Brettin T."/>
            <person name="Bruce D."/>
            <person name="Han C."/>
            <person name="Tapia R."/>
            <person name="Gilna P."/>
            <person name="Schmutz J."/>
            <person name="Larimer F."/>
            <person name="Land M."/>
            <person name="Hauser L."/>
            <person name="Kyrpides N."/>
            <person name="Mikhailova N."/>
            <person name="Miller C.D."/>
            <person name="Richardson P."/>
        </authorList>
    </citation>
    <scope>NUCLEOTIDE SEQUENCE [LARGE SCALE GENOMIC DNA]</scope>
    <source>
        <strain>KMS</strain>
    </source>
</reference>
<keyword id="KW-0030">Aminoacyl-tRNA synthetase</keyword>
<keyword id="KW-0067">ATP-binding</keyword>
<keyword id="KW-0963">Cytoplasm</keyword>
<keyword id="KW-0436">Ligase</keyword>
<keyword id="KW-0547">Nucleotide-binding</keyword>
<keyword id="KW-0648">Protein biosynthesis</keyword>
<name>SYS_MYCSK</name>
<evidence type="ECO:0000255" key="1">
    <source>
        <dbReference type="HAMAP-Rule" id="MF_00176"/>
    </source>
</evidence>
<accession>A1UN98</accession>
<dbReference type="EC" id="6.1.1.11" evidence="1"/>
<dbReference type="EMBL" id="CP000518">
    <property type="protein sequence ID" value="ABL94306.1"/>
    <property type="molecule type" value="Genomic_DNA"/>
</dbReference>
<dbReference type="SMR" id="A1UN98"/>
<dbReference type="STRING" id="189918.Mkms_5117"/>
<dbReference type="KEGG" id="mkm:Mkms_5117"/>
<dbReference type="HOGENOM" id="CLU_023797_0_1_11"/>
<dbReference type="OrthoDB" id="9804647at2"/>
<dbReference type="UniPathway" id="UPA00906">
    <property type="reaction ID" value="UER00895"/>
</dbReference>
<dbReference type="GO" id="GO:0005737">
    <property type="term" value="C:cytoplasm"/>
    <property type="evidence" value="ECO:0007669"/>
    <property type="project" value="UniProtKB-SubCell"/>
</dbReference>
<dbReference type="GO" id="GO:0005524">
    <property type="term" value="F:ATP binding"/>
    <property type="evidence" value="ECO:0007669"/>
    <property type="project" value="UniProtKB-UniRule"/>
</dbReference>
<dbReference type="GO" id="GO:0004828">
    <property type="term" value="F:serine-tRNA ligase activity"/>
    <property type="evidence" value="ECO:0007669"/>
    <property type="project" value="UniProtKB-UniRule"/>
</dbReference>
<dbReference type="GO" id="GO:0016260">
    <property type="term" value="P:selenocysteine biosynthetic process"/>
    <property type="evidence" value="ECO:0007669"/>
    <property type="project" value="UniProtKB-UniRule"/>
</dbReference>
<dbReference type="GO" id="GO:0006434">
    <property type="term" value="P:seryl-tRNA aminoacylation"/>
    <property type="evidence" value="ECO:0007669"/>
    <property type="project" value="UniProtKB-UniRule"/>
</dbReference>
<dbReference type="CDD" id="cd00770">
    <property type="entry name" value="SerRS_core"/>
    <property type="match status" value="1"/>
</dbReference>
<dbReference type="FunFam" id="1.10.287.40:FF:000004">
    <property type="entry name" value="Serine--tRNA ligase"/>
    <property type="match status" value="1"/>
</dbReference>
<dbReference type="Gene3D" id="3.30.930.10">
    <property type="entry name" value="Bira Bifunctional Protein, Domain 2"/>
    <property type="match status" value="1"/>
</dbReference>
<dbReference type="Gene3D" id="1.10.287.40">
    <property type="entry name" value="Serine-tRNA synthetase, tRNA binding domain"/>
    <property type="match status" value="1"/>
</dbReference>
<dbReference type="HAMAP" id="MF_00176">
    <property type="entry name" value="Ser_tRNA_synth_type1"/>
    <property type="match status" value="1"/>
</dbReference>
<dbReference type="InterPro" id="IPR002314">
    <property type="entry name" value="aa-tRNA-synt_IIb"/>
</dbReference>
<dbReference type="InterPro" id="IPR006195">
    <property type="entry name" value="aa-tRNA-synth_II"/>
</dbReference>
<dbReference type="InterPro" id="IPR045864">
    <property type="entry name" value="aa-tRNA-synth_II/BPL/LPL"/>
</dbReference>
<dbReference type="InterPro" id="IPR002317">
    <property type="entry name" value="Ser-tRNA-ligase_type_1"/>
</dbReference>
<dbReference type="InterPro" id="IPR015866">
    <property type="entry name" value="Ser-tRNA-synth_1_N"/>
</dbReference>
<dbReference type="InterPro" id="IPR042103">
    <property type="entry name" value="SerRS_1_N_sf"/>
</dbReference>
<dbReference type="InterPro" id="IPR033729">
    <property type="entry name" value="SerRS_core"/>
</dbReference>
<dbReference type="InterPro" id="IPR010978">
    <property type="entry name" value="tRNA-bd_arm"/>
</dbReference>
<dbReference type="NCBIfam" id="TIGR00414">
    <property type="entry name" value="serS"/>
    <property type="match status" value="1"/>
</dbReference>
<dbReference type="PANTHER" id="PTHR11778">
    <property type="entry name" value="SERYL-TRNA SYNTHETASE"/>
    <property type="match status" value="1"/>
</dbReference>
<dbReference type="Pfam" id="PF02403">
    <property type="entry name" value="Seryl_tRNA_N"/>
    <property type="match status" value="1"/>
</dbReference>
<dbReference type="Pfam" id="PF00587">
    <property type="entry name" value="tRNA-synt_2b"/>
    <property type="match status" value="1"/>
</dbReference>
<dbReference type="PIRSF" id="PIRSF001529">
    <property type="entry name" value="Ser-tRNA-synth_IIa"/>
    <property type="match status" value="1"/>
</dbReference>
<dbReference type="PRINTS" id="PR00981">
    <property type="entry name" value="TRNASYNTHSER"/>
</dbReference>
<dbReference type="SUPFAM" id="SSF55681">
    <property type="entry name" value="Class II aaRS and biotin synthetases"/>
    <property type="match status" value="1"/>
</dbReference>
<dbReference type="SUPFAM" id="SSF46589">
    <property type="entry name" value="tRNA-binding arm"/>
    <property type="match status" value="1"/>
</dbReference>
<dbReference type="PROSITE" id="PS50862">
    <property type="entry name" value="AA_TRNA_LIGASE_II"/>
    <property type="match status" value="1"/>
</dbReference>
<sequence>MIDLKFLRENPDAVRASQRSRGEDPALVDALLDADAARRAAVSAADNLRAEQKAASKKVGKASPEERPALLTQAKELAEQVKAAEAAQADADRTFTAAHMAISNVVIEGVPAGGEDCFAVLDVVGEPRAIDDPKDHLELGEALGLIDMERGAKVAGSRFYFLTGRGALLQLGLMQLAVRLATDNGFTLVIPPVLVRPEVMAGTGFLGAHADEVYRLESDDMYLVGTSEVPLAGYHADEIIDLSAGPRRYAGWSSCFRREAGSYGKDTRGIIRVHQFDKVEGFIYCKPEDAAAEHDRLLGWQREMLALIEVPYRVIDVAAGDLGSSAARKYDCEAWVPTQQTYRELTSTSNCTTFQARRLSTRYRDENGKPQIAATLNGTLATTRWLVAILENHQQPDGSVRVPAALVPFVGTEVLEP</sequence>
<proteinExistence type="inferred from homology"/>
<organism>
    <name type="scientific">Mycobacterium sp. (strain KMS)</name>
    <dbReference type="NCBI Taxonomy" id="189918"/>
    <lineage>
        <taxon>Bacteria</taxon>
        <taxon>Bacillati</taxon>
        <taxon>Actinomycetota</taxon>
        <taxon>Actinomycetes</taxon>
        <taxon>Mycobacteriales</taxon>
        <taxon>Mycobacteriaceae</taxon>
        <taxon>Mycobacterium</taxon>
    </lineage>
</organism>
<protein>
    <recommendedName>
        <fullName evidence="1">Serine--tRNA ligase</fullName>
        <ecNumber evidence="1">6.1.1.11</ecNumber>
    </recommendedName>
    <alternativeName>
        <fullName evidence="1">Seryl-tRNA synthetase</fullName>
        <shortName evidence="1">SerRS</shortName>
    </alternativeName>
    <alternativeName>
        <fullName evidence="1">Seryl-tRNA(Ser/Sec) synthetase</fullName>
    </alternativeName>
</protein>